<sequence>MSTPDNRSVNFFSLFRRGQHYSKTWPLEKRLAPVFVENRVIKMTRYAIRFMPPIAVFTLCWQIALGGQLGPAVATALFALSLPMQGLWWLGKRSVTPLPPAILNWFYEVRGKLQESGQVLAPVEGKPDYQALADTLKRAFKQLDKTFLDDL</sequence>
<protein>
    <recommendedName>
        <fullName evidence="1">UPF0208 membrane protein YfbV</fullName>
    </recommendedName>
</protein>
<dbReference type="EMBL" id="CP000946">
    <property type="protein sequence ID" value="ACA77023.1"/>
    <property type="molecule type" value="Genomic_DNA"/>
</dbReference>
<dbReference type="RefSeq" id="WP_000106627.1">
    <property type="nucleotide sequence ID" value="NZ_MTFT01000028.1"/>
</dbReference>
<dbReference type="GeneID" id="93774879"/>
<dbReference type="KEGG" id="ecl:EcolC_1357"/>
<dbReference type="HOGENOM" id="CLU_128746_0_0_6"/>
<dbReference type="GO" id="GO:0005886">
    <property type="term" value="C:plasma membrane"/>
    <property type="evidence" value="ECO:0007669"/>
    <property type="project" value="UniProtKB-SubCell"/>
</dbReference>
<dbReference type="HAMAP" id="MF_01101">
    <property type="entry name" value="UPF0208"/>
    <property type="match status" value="1"/>
</dbReference>
<dbReference type="InterPro" id="IPR007334">
    <property type="entry name" value="UPF0208"/>
</dbReference>
<dbReference type="NCBIfam" id="NF002493">
    <property type="entry name" value="PRK01816.1"/>
    <property type="match status" value="1"/>
</dbReference>
<dbReference type="Pfam" id="PF04217">
    <property type="entry name" value="DUF412"/>
    <property type="match status" value="1"/>
</dbReference>
<gene>
    <name evidence="1" type="primary">yfbV</name>
    <name type="ordered locus">EcolC_1357</name>
</gene>
<comment type="subcellular location">
    <subcellularLocation>
        <location evidence="1">Cell inner membrane</location>
        <topology evidence="1">Multi-pass membrane protein</topology>
    </subcellularLocation>
</comment>
<comment type="similarity">
    <text evidence="1">Belongs to the UPF0208 family.</text>
</comment>
<reference key="1">
    <citation type="submission" date="2008-02" db="EMBL/GenBank/DDBJ databases">
        <title>Complete sequence of Escherichia coli C str. ATCC 8739.</title>
        <authorList>
            <person name="Copeland A."/>
            <person name="Lucas S."/>
            <person name="Lapidus A."/>
            <person name="Glavina del Rio T."/>
            <person name="Dalin E."/>
            <person name="Tice H."/>
            <person name="Bruce D."/>
            <person name="Goodwin L."/>
            <person name="Pitluck S."/>
            <person name="Kiss H."/>
            <person name="Brettin T."/>
            <person name="Detter J.C."/>
            <person name="Han C."/>
            <person name="Kuske C.R."/>
            <person name="Schmutz J."/>
            <person name="Larimer F."/>
            <person name="Land M."/>
            <person name="Hauser L."/>
            <person name="Kyrpides N."/>
            <person name="Mikhailova N."/>
            <person name="Ingram L."/>
            <person name="Richardson P."/>
        </authorList>
    </citation>
    <scope>NUCLEOTIDE SEQUENCE [LARGE SCALE GENOMIC DNA]</scope>
    <source>
        <strain>ATCC 8739 / DSM 1576 / NBRC 3972 / NCIMB 8545 / WDCM 00012 / Crooks</strain>
    </source>
</reference>
<feature type="chain" id="PRO_1000084791" description="UPF0208 membrane protein YfbV">
    <location>
        <begin position="1"/>
        <end position="151"/>
    </location>
</feature>
<feature type="transmembrane region" description="Helical" evidence="1">
    <location>
        <begin position="46"/>
        <end position="65"/>
    </location>
</feature>
<feature type="transmembrane region" description="Helical" evidence="1">
    <location>
        <begin position="69"/>
        <end position="91"/>
    </location>
</feature>
<name>YFBV_ECOLC</name>
<evidence type="ECO:0000255" key="1">
    <source>
        <dbReference type="HAMAP-Rule" id="MF_01101"/>
    </source>
</evidence>
<accession>B1IXP7</accession>
<organism>
    <name type="scientific">Escherichia coli (strain ATCC 8739 / DSM 1576 / NBRC 3972 / NCIMB 8545 / WDCM 00012 / Crooks)</name>
    <dbReference type="NCBI Taxonomy" id="481805"/>
    <lineage>
        <taxon>Bacteria</taxon>
        <taxon>Pseudomonadati</taxon>
        <taxon>Pseudomonadota</taxon>
        <taxon>Gammaproteobacteria</taxon>
        <taxon>Enterobacterales</taxon>
        <taxon>Enterobacteriaceae</taxon>
        <taxon>Escherichia</taxon>
    </lineage>
</organism>
<proteinExistence type="inferred from homology"/>
<keyword id="KW-0997">Cell inner membrane</keyword>
<keyword id="KW-1003">Cell membrane</keyword>
<keyword id="KW-0472">Membrane</keyword>
<keyword id="KW-0812">Transmembrane</keyword>
<keyword id="KW-1133">Transmembrane helix</keyword>